<protein>
    <recommendedName>
        <fullName evidence="1">Cell division protein SepF</fullName>
    </recommendedName>
</protein>
<gene>
    <name evidence="1" type="primary">sepF</name>
    <name type="ordered locus">BCB4264_A4000</name>
</gene>
<comment type="function">
    <text evidence="1">Cell division protein that is part of the divisome complex and is recruited early to the Z-ring. Probably stimulates Z-ring formation, perhaps through the cross-linking of FtsZ protofilaments. Its function overlaps with FtsA.</text>
</comment>
<comment type="subunit">
    <text evidence="1">Homodimer. Interacts with FtsZ.</text>
</comment>
<comment type="subcellular location">
    <subcellularLocation>
        <location evidence="1">Cytoplasm</location>
    </subcellularLocation>
    <text evidence="1">Localizes to the division site, in a FtsZ-dependent manner.</text>
</comment>
<comment type="similarity">
    <text evidence="1">Belongs to the SepF family.</text>
</comment>
<organism>
    <name type="scientific">Bacillus cereus (strain B4264)</name>
    <dbReference type="NCBI Taxonomy" id="405532"/>
    <lineage>
        <taxon>Bacteria</taxon>
        <taxon>Bacillati</taxon>
        <taxon>Bacillota</taxon>
        <taxon>Bacilli</taxon>
        <taxon>Bacillales</taxon>
        <taxon>Bacillaceae</taxon>
        <taxon>Bacillus</taxon>
        <taxon>Bacillus cereus group</taxon>
    </lineage>
</organism>
<feature type="chain" id="PRO_1000138460" description="Cell division protein SepF">
    <location>
        <begin position="1"/>
        <end position="156"/>
    </location>
</feature>
<feature type="region of interest" description="Disordered" evidence="2">
    <location>
        <begin position="20"/>
        <end position="50"/>
    </location>
</feature>
<feature type="compositionally biased region" description="Basic and acidic residues" evidence="2">
    <location>
        <begin position="20"/>
        <end position="36"/>
    </location>
</feature>
<proteinExistence type="inferred from homology"/>
<dbReference type="EMBL" id="CP001176">
    <property type="protein sequence ID" value="ACK61857.1"/>
    <property type="molecule type" value="Genomic_DNA"/>
</dbReference>
<dbReference type="RefSeq" id="WP_000119129.1">
    <property type="nucleotide sequence ID" value="NZ_VEHB01000002.1"/>
</dbReference>
<dbReference type="SMR" id="B7H6N5"/>
<dbReference type="KEGG" id="bcb:BCB4264_A4000"/>
<dbReference type="HOGENOM" id="CLU_078499_4_1_9"/>
<dbReference type="Proteomes" id="UP000007096">
    <property type="component" value="Chromosome"/>
</dbReference>
<dbReference type="GO" id="GO:0005737">
    <property type="term" value="C:cytoplasm"/>
    <property type="evidence" value="ECO:0007669"/>
    <property type="project" value="UniProtKB-SubCell"/>
</dbReference>
<dbReference type="GO" id="GO:0000917">
    <property type="term" value="P:division septum assembly"/>
    <property type="evidence" value="ECO:0007669"/>
    <property type="project" value="UniProtKB-KW"/>
</dbReference>
<dbReference type="GO" id="GO:0043093">
    <property type="term" value="P:FtsZ-dependent cytokinesis"/>
    <property type="evidence" value="ECO:0007669"/>
    <property type="project" value="UniProtKB-UniRule"/>
</dbReference>
<dbReference type="Gene3D" id="3.30.110.150">
    <property type="entry name" value="SepF-like protein"/>
    <property type="match status" value="1"/>
</dbReference>
<dbReference type="HAMAP" id="MF_01197">
    <property type="entry name" value="SepF"/>
    <property type="match status" value="1"/>
</dbReference>
<dbReference type="InterPro" id="IPR023052">
    <property type="entry name" value="Cell_div_SepF"/>
</dbReference>
<dbReference type="InterPro" id="IPR007561">
    <property type="entry name" value="Cell_div_SepF/SepF-rel"/>
</dbReference>
<dbReference type="InterPro" id="IPR038594">
    <property type="entry name" value="SepF-like_sf"/>
</dbReference>
<dbReference type="PANTHER" id="PTHR35798">
    <property type="entry name" value="CELL DIVISION PROTEIN SEPF"/>
    <property type="match status" value="1"/>
</dbReference>
<dbReference type="PANTHER" id="PTHR35798:SF1">
    <property type="entry name" value="CELL DIVISION PROTEIN SEPF"/>
    <property type="match status" value="1"/>
</dbReference>
<dbReference type="Pfam" id="PF04472">
    <property type="entry name" value="SepF"/>
    <property type="match status" value="1"/>
</dbReference>
<name>SEPF_BACC4</name>
<reference key="1">
    <citation type="submission" date="2008-10" db="EMBL/GenBank/DDBJ databases">
        <title>Genome sequence of Bacillus cereus B4264.</title>
        <authorList>
            <person name="Dodson R.J."/>
            <person name="Durkin A.S."/>
            <person name="Rosovitz M.J."/>
            <person name="Rasko D.A."/>
            <person name="Hoffmaster A."/>
            <person name="Ravel J."/>
            <person name="Sutton G."/>
        </authorList>
    </citation>
    <scope>NUCLEOTIDE SEQUENCE [LARGE SCALE GENOMIC DNA]</scope>
    <source>
        <strain>B4264</strain>
    </source>
</reference>
<keyword id="KW-0131">Cell cycle</keyword>
<keyword id="KW-0132">Cell division</keyword>
<keyword id="KW-0963">Cytoplasm</keyword>
<keyword id="KW-0717">Septation</keyword>
<sequence>MSWSKVKYFFFDTPEEKEAAQYGYEKEQTDMKKQQDPPEQQDVTFPKAQPKQNVVSIETAKQSSKVVLLEPRTYSEAQGIADHLKGRRAVVINLQRMSTDQAVRIVDFLSGTVYAIGGDIQKIGPKTFMCTPENVDIVGAISELFGEEEETNIKRW</sequence>
<accession>B7H6N5</accession>
<evidence type="ECO:0000255" key="1">
    <source>
        <dbReference type="HAMAP-Rule" id="MF_01197"/>
    </source>
</evidence>
<evidence type="ECO:0000256" key="2">
    <source>
        <dbReference type="SAM" id="MobiDB-lite"/>
    </source>
</evidence>